<comment type="similarity">
    <text evidence="1">Belongs to the bacterial ribosomal protein bL35 family.</text>
</comment>
<gene>
    <name evidence="1" type="primary">rpmI</name>
    <name type="ordered locus">NWMN_1573</name>
</gene>
<name>RL35_STAAE</name>
<proteinExistence type="inferred from homology"/>
<reference key="1">
    <citation type="journal article" date="2008" name="J. Bacteriol.">
        <title>Genome sequence of Staphylococcus aureus strain Newman and comparative analysis of staphylococcal genomes: polymorphism and evolution of two major pathogenicity islands.</title>
        <authorList>
            <person name="Baba T."/>
            <person name="Bae T."/>
            <person name="Schneewind O."/>
            <person name="Takeuchi F."/>
            <person name="Hiramatsu K."/>
        </authorList>
    </citation>
    <scope>NUCLEOTIDE SEQUENCE [LARGE SCALE GENOMIC DNA]</scope>
    <source>
        <strain>Newman</strain>
    </source>
</reference>
<dbReference type="EMBL" id="AP009351">
    <property type="protein sequence ID" value="BAF67845.1"/>
    <property type="molecule type" value="Genomic_DNA"/>
</dbReference>
<dbReference type="RefSeq" id="WP_001125540.1">
    <property type="nucleotide sequence ID" value="NZ_JBBIAE010000001.1"/>
</dbReference>
<dbReference type="SMR" id="A6QHL3"/>
<dbReference type="GeneID" id="98346041"/>
<dbReference type="KEGG" id="sae:NWMN_1573"/>
<dbReference type="HOGENOM" id="CLU_169643_3_0_9"/>
<dbReference type="Proteomes" id="UP000006386">
    <property type="component" value="Chromosome"/>
</dbReference>
<dbReference type="GO" id="GO:0022625">
    <property type="term" value="C:cytosolic large ribosomal subunit"/>
    <property type="evidence" value="ECO:0007669"/>
    <property type="project" value="TreeGrafter"/>
</dbReference>
<dbReference type="GO" id="GO:0003735">
    <property type="term" value="F:structural constituent of ribosome"/>
    <property type="evidence" value="ECO:0007669"/>
    <property type="project" value="InterPro"/>
</dbReference>
<dbReference type="GO" id="GO:0006412">
    <property type="term" value="P:translation"/>
    <property type="evidence" value="ECO:0007669"/>
    <property type="project" value="UniProtKB-UniRule"/>
</dbReference>
<dbReference type="FunFam" id="4.10.410.60:FF:000001">
    <property type="entry name" value="50S ribosomal protein L35"/>
    <property type="match status" value="1"/>
</dbReference>
<dbReference type="Gene3D" id="4.10.410.60">
    <property type="match status" value="1"/>
</dbReference>
<dbReference type="HAMAP" id="MF_00514">
    <property type="entry name" value="Ribosomal_bL35"/>
    <property type="match status" value="1"/>
</dbReference>
<dbReference type="InterPro" id="IPR001706">
    <property type="entry name" value="Ribosomal_bL35"/>
</dbReference>
<dbReference type="InterPro" id="IPR021137">
    <property type="entry name" value="Ribosomal_bL35-like"/>
</dbReference>
<dbReference type="InterPro" id="IPR018265">
    <property type="entry name" value="Ribosomal_bL35_CS"/>
</dbReference>
<dbReference type="InterPro" id="IPR037229">
    <property type="entry name" value="Ribosomal_bL35_sf"/>
</dbReference>
<dbReference type="NCBIfam" id="TIGR00001">
    <property type="entry name" value="rpmI_bact"/>
    <property type="match status" value="1"/>
</dbReference>
<dbReference type="PANTHER" id="PTHR33343">
    <property type="entry name" value="54S RIBOSOMAL PROTEIN BL35M"/>
    <property type="match status" value="1"/>
</dbReference>
<dbReference type="PANTHER" id="PTHR33343:SF1">
    <property type="entry name" value="LARGE RIBOSOMAL SUBUNIT PROTEIN BL35M"/>
    <property type="match status" value="1"/>
</dbReference>
<dbReference type="Pfam" id="PF01632">
    <property type="entry name" value="Ribosomal_L35p"/>
    <property type="match status" value="1"/>
</dbReference>
<dbReference type="PRINTS" id="PR00064">
    <property type="entry name" value="RIBOSOMALL35"/>
</dbReference>
<dbReference type="SUPFAM" id="SSF143034">
    <property type="entry name" value="L35p-like"/>
    <property type="match status" value="1"/>
</dbReference>
<dbReference type="PROSITE" id="PS00936">
    <property type="entry name" value="RIBOSOMAL_L35"/>
    <property type="match status" value="1"/>
</dbReference>
<protein>
    <recommendedName>
        <fullName evidence="1">Large ribosomal subunit protein bL35</fullName>
    </recommendedName>
    <alternativeName>
        <fullName evidence="3">50S ribosomal protein L35</fullName>
    </alternativeName>
</protein>
<keyword id="KW-0687">Ribonucleoprotein</keyword>
<keyword id="KW-0689">Ribosomal protein</keyword>
<feature type="chain" id="PRO_1000072481" description="Large ribosomal subunit protein bL35">
    <location>
        <begin position="1"/>
        <end position="66"/>
    </location>
</feature>
<feature type="region of interest" description="Disordered" evidence="2">
    <location>
        <begin position="1"/>
        <end position="49"/>
    </location>
</feature>
<feature type="compositionally biased region" description="Basic residues" evidence="2">
    <location>
        <begin position="1"/>
        <end position="16"/>
    </location>
</feature>
<feature type="compositionally biased region" description="Basic residues" evidence="2">
    <location>
        <begin position="38"/>
        <end position="49"/>
    </location>
</feature>
<sequence length="66" mass="7697">MPKMKTHRGAAKRVKRTASGQLKRSRAFTSHLFANKSTKQKRQLRKARLVSKSDMKRVKQLLAYKK</sequence>
<evidence type="ECO:0000255" key="1">
    <source>
        <dbReference type="HAMAP-Rule" id="MF_00514"/>
    </source>
</evidence>
<evidence type="ECO:0000256" key="2">
    <source>
        <dbReference type="SAM" id="MobiDB-lite"/>
    </source>
</evidence>
<evidence type="ECO:0000305" key="3"/>
<accession>A6QHL3</accession>
<organism>
    <name type="scientific">Staphylococcus aureus (strain Newman)</name>
    <dbReference type="NCBI Taxonomy" id="426430"/>
    <lineage>
        <taxon>Bacteria</taxon>
        <taxon>Bacillati</taxon>
        <taxon>Bacillota</taxon>
        <taxon>Bacilli</taxon>
        <taxon>Bacillales</taxon>
        <taxon>Staphylococcaceae</taxon>
        <taxon>Staphylococcus</taxon>
    </lineage>
</organism>